<dbReference type="EC" id="6.1.1.10" evidence="1"/>
<dbReference type="EMBL" id="CP000020">
    <property type="protein sequence ID" value="AAW86249.1"/>
    <property type="molecule type" value="Genomic_DNA"/>
</dbReference>
<dbReference type="RefSeq" id="WP_011262296.1">
    <property type="nucleotide sequence ID" value="NC_006840.2"/>
</dbReference>
<dbReference type="RefSeq" id="YP_205137.1">
    <property type="nucleotide sequence ID" value="NC_006840.2"/>
</dbReference>
<dbReference type="SMR" id="Q5E3Z7"/>
<dbReference type="STRING" id="312309.VF_1754"/>
<dbReference type="EnsemblBacteria" id="AAW86249">
    <property type="protein sequence ID" value="AAW86249"/>
    <property type="gene ID" value="VF_1754"/>
</dbReference>
<dbReference type="GeneID" id="54164453"/>
<dbReference type="KEGG" id="vfi:VF_1754"/>
<dbReference type="PATRIC" id="fig|312309.11.peg.1780"/>
<dbReference type="eggNOG" id="COG0073">
    <property type="taxonomic scope" value="Bacteria"/>
</dbReference>
<dbReference type="eggNOG" id="COG0143">
    <property type="taxonomic scope" value="Bacteria"/>
</dbReference>
<dbReference type="HOGENOM" id="CLU_009710_7_0_6"/>
<dbReference type="OrthoDB" id="9810191at2"/>
<dbReference type="Proteomes" id="UP000000537">
    <property type="component" value="Chromosome I"/>
</dbReference>
<dbReference type="GO" id="GO:0005829">
    <property type="term" value="C:cytosol"/>
    <property type="evidence" value="ECO:0007669"/>
    <property type="project" value="TreeGrafter"/>
</dbReference>
<dbReference type="GO" id="GO:0005524">
    <property type="term" value="F:ATP binding"/>
    <property type="evidence" value="ECO:0007669"/>
    <property type="project" value="UniProtKB-UniRule"/>
</dbReference>
<dbReference type="GO" id="GO:0046872">
    <property type="term" value="F:metal ion binding"/>
    <property type="evidence" value="ECO:0007669"/>
    <property type="project" value="UniProtKB-KW"/>
</dbReference>
<dbReference type="GO" id="GO:0004825">
    <property type="term" value="F:methionine-tRNA ligase activity"/>
    <property type="evidence" value="ECO:0007669"/>
    <property type="project" value="UniProtKB-UniRule"/>
</dbReference>
<dbReference type="GO" id="GO:0000049">
    <property type="term" value="F:tRNA binding"/>
    <property type="evidence" value="ECO:0007669"/>
    <property type="project" value="UniProtKB-KW"/>
</dbReference>
<dbReference type="GO" id="GO:0006431">
    <property type="term" value="P:methionyl-tRNA aminoacylation"/>
    <property type="evidence" value="ECO:0007669"/>
    <property type="project" value="UniProtKB-UniRule"/>
</dbReference>
<dbReference type="CDD" id="cd07957">
    <property type="entry name" value="Anticodon_Ia_Met"/>
    <property type="match status" value="1"/>
</dbReference>
<dbReference type="CDD" id="cd00814">
    <property type="entry name" value="MetRS_core"/>
    <property type="match status" value="1"/>
</dbReference>
<dbReference type="CDD" id="cd02800">
    <property type="entry name" value="tRNA_bind_EcMetRS_like"/>
    <property type="match status" value="1"/>
</dbReference>
<dbReference type="FunFam" id="1.10.730.10:FF:000005">
    <property type="entry name" value="Methionine--tRNA ligase"/>
    <property type="match status" value="1"/>
</dbReference>
<dbReference type="FunFam" id="2.20.28.20:FF:000001">
    <property type="entry name" value="Methionine--tRNA ligase"/>
    <property type="match status" value="1"/>
</dbReference>
<dbReference type="FunFam" id="2.40.50.140:FF:000042">
    <property type="entry name" value="Methionine--tRNA ligase"/>
    <property type="match status" value="1"/>
</dbReference>
<dbReference type="Gene3D" id="3.40.50.620">
    <property type="entry name" value="HUPs"/>
    <property type="match status" value="1"/>
</dbReference>
<dbReference type="Gene3D" id="1.10.730.10">
    <property type="entry name" value="Isoleucyl-tRNA Synthetase, Domain 1"/>
    <property type="match status" value="1"/>
</dbReference>
<dbReference type="Gene3D" id="2.20.28.20">
    <property type="entry name" value="Methionyl-tRNA synthetase, Zn-domain"/>
    <property type="match status" value="1"/>
</dbReference>
<dbReference type="Gene3D" id="2.40.50.140">
    <property type="entry name" value="Nucleic acid-binding proteins"/>
    <property type="match status" value="1"/>
</dbReference>
<dbReference type="HAMAP" id="MF_00098">
    <property type="entry name" value="Met_tRNA_synth_type1"/>
    <property type="match status" value="1"/>
</dbReference>
<dbReference type="InterPro" id="IPR001412">
    <property type="entry name" value="aa-tRNA-synth_I_CS"/>
</dbReference>
<dbReference type="InterPro" id="IPR041872">
    <property type="entry name" value="Anticodon_Met"/>
</dbReference>
<dbReference type="InterPro" id="IPR004495">
    <property type="entry name" value="Met-tRNA-synth_bsu_C"/>
</dbReference>
<dbReference type="InterPro" id="IPR023458">
    <property type="entry name" value="Met-tRNA_ligase_1"/>
</dbReference>
<dbReference type="InterPro" id="IPR014758">
    <property type="entry name" value="Met-tRNA_synth"/>
</dbReference>
<dbReference type="InterPro" id="IPR015413">
    <property type="entry name" value="Methionyl/Leucyl_tRNA_Synth"/>
</dbReference>
<dbReference type="InterPro" id="IPR033911">
    <property type="entry name" value="MetRS_core"/>
</dbReference>
<dbReference type="InterPro" id="IPR029038">
    <property type="entry name" value="MetRS_Zn"/>
</dbReference>
<dbReference type="InterPro" id="IPR012340">
    <property type="entry name" value="NA-bd_OB-fold"/>
</dbReference>
<dbReference type="InterPro" id="IPR014729">
    <property type="entry name" value="Rossmann-like_a/b/a_fold"/>
</dbReference>
<dbReference type="InterPro" id="IPR002547">
    <property type="entry name" value="tRNA-bd_dom"/>
</dbReference>
<dbReference type="InterPro" id="IPR009080">
    <property type="entry name" value="tRNAsynth_Ia_anticodon-bd"/>
</dbReference>
<dbReference type="NCBIfam" id="TIGR00398">
    <property type="entry name" value="metG"/>
    <property type="match status" value="1"/>
</dbReference>
<dbReference type="NCBIfam" id="TIGR00399">
    <property type="entry name" value="metG_C_term"/>
    <property type="match status" value="1"/>
</dbReference>
<dbReference type="NCBIfam" id="NF001100">
    <property type="entry name" value="PRK00133.1"/>
    <property type="match status" value="1"/>
</dbReference>
<dbReference type="PANTHER" id="PTHR45765">
    <property type="entry name" value="METHIONINE--TRNA LIGASE"/>
    <property type="match status" value="1"/>
</dbReference>
<dbReference type="PANTHER" id="PTHR45765:SF1">
    <property type="entry name" value="METHIONINE--TRNA LIGASE, CYTOPLASMIC"/>
    <property type="match status" value="1"/>
</dbReference>
<dbReference type="Pfam" id="PF19303">
    <property type="entry name" value="Anticodon_3"/>
    <property type="match status" value="1"/>
</dbReference>
<dbReference type="Pfam" id="PF09334">
    <property type="entry name" value="tRNA-synt_1g"/>
    <property type="match status" value="1"/>
</dbReference>
<dbReference type="Pfam" id="PF01588">
    <property type="entry name" value="tRNA_bind"/>
    <property type="match status" value="1"/>
</dbReference>
<dbReference type="PRINTS" id="PR01041">
    <property type="entry name" value="TRNASYNTHMET"/>
</dbReference>
<dbReference type="SUPFAM" id="SSF47323">
    <property type="entry name" value="Anticodon-binding domain of a subclass of class I aminoacyl-tRNA synthetases"/>
    <property type="match status" value="1"/>
</dbReference>
<dbReference type="SUPFAM" id="SSF57770">
    <property type="entry name" value="Methionyl-tRNA synthetase (MetRS), Zn-domain"/>
    <property type="match status" value="1"/>
</dbReference>
<dbReference type="SUPFAM" id="SSF50249">
    <property type="entry name" value="Nucleic acid-binding proteins"/>
    <property type="match status" value="1"/>
</dbReference>
<dbReference type="SUPFAM" id="SSF52374">
    <property type="entry name" value="Nucleotidylyl transferase"/>
    <property type="match status" value="1"/>
</dbReference>
<dbReference type="PROSITE" id="PS00178">
    <property type="entry name" value="AA_TRNA_LIGASE_I"/>
    <property type="match status" value="1"/>
</dbReference>
<dbReference type="PROSITE" id="PS50886">
    <property type="entry name" value="TRBD"/>
    <property type="match status" value="1"/>
</dbReference>
<reference key="1">
    <citation type="journal article" date="2005" name="Proc. Natl. Acad. Sci. U.S.A.">
        <title>Complete genome sequence of Vibrio fischeri: a symbiotic bacterium with pathogenic congeners.</title>
        <authorList>
            <person name="Ruby E.G."/>
            <person name="Urbanowski M."/>
            <person name="Campbell J."/>
            <person name="Dunn A."/>
            <person name="Faini M."/>
            <person name="Gunsalus R."/>
            <person name="Lostroh P."/>
            <person name="Lupp C."/>
            <person name="McCann J."/>
            <person name="Millikan D."/>
            <person name="Schaefer A."/>
            <person name="Stabb E."/>
            <person name="Stevens A."/>
            <person name="Visick K."/>
            <person name="Whistler C."/>
            <person name="Greenberg E.P."/>
        </authorList>
    </citation>
    <scope>NUCLEOTIDE SEQUENCE [LARGE SCALE GENOMIC DNA]</scope>
    <source>
        <strain>ATCC 700601 / ES114</strain>
    </source>
</reference>
<feature type="chain" id="PRO_0000139170" description="Methionine--tRNA ligase">
    <location>
        <begin position="1"/>
        <end position="686"/>
    </location>
</feature>
<feature type="domain" description="tRNA-binding" evidence="1">
    <location>
        <begin position="585"/>
        <end position="686"/>
    </location>
</feature>
<feature type="short sequence motif" description="'HIGH' region">
    <location>
        <begin position="15"/>
        <end position="25"/>
    </location>
</feature>
<feature type="short sequence motif" description="'KMSKS' region">
    <location>
        <begin position="332"/>
        <end position="336"/>
    </location>
</feature>
<feature type="binding site" evidence="1">
    <location>
        <position position="146"/>
    </location>
    <ligand>
        <name>Zn(2+)</name>
        <dbReference type="ChEBI" id="CHEBI:29105"/>
    </ligand>
</feature>
<feature type="binding site" evidence="1">
    <location>
        <position position="149"/>
    </location>
    <ligand>
        <name>Zn(2+)</name>
        <dbReference type="ChEBI" id="CHEBI:29105"/>
    </ligand>
</feature>
<feature type="binding site" evidence="1">
    <location>
        <position position="159"/>
    </location>
    <ligand>
        <name>Zn(2+)</name>
        <dbReference type="ChEBI" id="CHEBI:29105"/>
    </ligand>
</feature>
<feature type="binding site" evidence="1">
    <location>
        <position position="162"/>
    </location>
    <ligand>
        <name>Zn(2+)</name>
        <dbReference type="ChEBI" id="CHEBI:29105"/>
    </ligand>
</feature>
<feature type="binding site" evidence="1">
    <location>
        <position position="335"/>
    </location>
    <ligand>
        <name>ATP</name>
        <dbReference type="ChEBI" id="CHEBI:30616"/>
    </ligand>
</feature>
<organism>
    <name type="scientific">Aliivibrio fischeri (strain ATCC 700601 / ES114)</name>
    <name type="common">Vibrio fischeri</name>
    <dbReference type="NCBI Taxonomy" id="312309"/>
    <lineage>
        <taxon>Bacteria</taxon>
        <taxon>Pseudomonadati</taxon>
        <taxon>Pseudomonadota</taxon>
        <taxon>Gammaproteobacteria</taxon>
        <taxon>Vibrionales</taxon>
        <taxon>Vibrionaceae</taxon>
        <taxon>Aliivibrio</taxon>
    </lineage>
</organism>
<sequence length="686" mass="77887">MATDPRKILVTCALPYANGSIHLGHMLEHIQADIWVRYQRLRGNDVNFICADDAHGTPIMLKAQQMGISPEEMIAAVSEEHQKDFAGFDISFDNYHSTHSDENRELASHIYLELKKNGFITSRTISQLFDPEKEMFLPDRFVKGTCPKCKAEDQYGDNCDNCGETYSPTDLINPKSAVSGATPVMKDSEHFFFDLPQFESMLKEWTRSGSLQSETANKMQEWFESGLQQWDISRDAPYFGFEIPGETNKFFYVWLDAPIGYMGSFKNLCNKRDDLNFDEYWKKDSTTELYHFIGKDIVYFHSLFWPAMLDGAGFRKPNNVFVHGYVTVNGAKMSKSKGTFIKAGTYLNHLDPECLRYYYAAKLNSRIDDLDLNLEDFTQRVNSDVVNKIVNLASRNAGFITKRFDGKLADNFVEPELYNEFIAAADRIAELYETREFGRAIREITALADKANQYIDEKAPWVLAKEEGKEQELQEVSSVGINLFRVLMAYLKPVMPELAARTEAFLNETLTWEGVAQPLVAHEITKFKALFARIDPKKVEAMIEESKEDAAIEMAAKEKAEAEKEKASQTELDKDPIADEIEFDAFEAVDMRIARIISCEEVPKANKLLKFQLDIGGETRQVFSGIKSAYKPEELEGKLTVMVANLKPRKMKFGMSEGMILAAGPGGKELWILEPHEGAQPGMRVM</sequence>
<comment type="function">
    <text evidence="1">Is required not only for elongation of protein synthesis but also for the initiation of all mRNA translation through initiator tRNA(fMet) aminoacylation.</text>
</comment>
<comment type="catalytic activity">
    <reaction evidence="1">
        <text>tRNA(Met) + L-methionine + ATP = L-methionyl-tRNA(Met) + AMP + diphosphate</text>
        <dbReference type="Rhea" id="RHEA:13481"/>
        <dbReference type="Rhea" id="RHEA-COMP:9667"/>
        <dbReference type="Rhea" id="RHEA-COMP:9698"/>
        <dbReference type="ChEBI" id="CHEBI:30616"/>
        <dbReference type="ChEBI" id="CHEBI:33019"/>
        <dbReference type="ChEBI" id="CHEBI:57844"/>
        <dbReference type="ChEBI" id="CHEBI:78442"/>
        <dbReference type="ChEBI" id="CHEBI:78530"/>
        <dbReference type="ChEBI" id="CHEBI:456215"/>
        <dbReference type="EC" id="6.1.1.10"/>
    </reaction>
</comment>
<comment type="cofactor">
    <cofactor evidence="1">
        <name>Zn(2+)</name>
        <dbReference type="ChEBI" id="CHEBI:29105"/>
    </cofactor>
    <text evidence="1">Binds 1 zinc ion per subunit.</text>
</comment>
<comment type="subunit">
    <text evidence="1">Homodimer.</text>
</comment>
<comment type="subcellular location">
    <subcellularLocation>
        <location evidence="1">Cytoplasm</location>
    </subcellularLocation>
</comment>
<comment type="similarity">
    <text evidence="1">Belongs to the class-I aminoacyl-tRNA synthetase family. MetG type 1 subfamily.</text>
</comment>
<accession>Q5E3Z7</accession>
<evidence type="ECO:0000255" key="1">
    <source>
        <dbReference type="HAMAP-Rule" id="MF_00098"/>
    </source>
</evidence>
<gene>
    <name evidence="1" type="primary">metG</name>
    <name type="ordered locus">VF_1754</name>
</gene>
<keyword id="KW-0030">Aminoacyl-tRNA synthetase</keyword>
<keyword id="KW-0067">ATP-binding</keyword>
<keyword id="KW-0963">Cytoplasm</keyword>
<keyword id="KW-0436">Ligase</keyword>
<keyword id="KW-0479">Metal-binding</keyword>
<keyword id="KW-0547">Nucleotide-binding</keyword>
<keyword id="KW-0648">Protein biosynthesis</keyword>
<keyword id="KW-1185">Reference proteome</keyword>
<keyword id="KW-0694">RNA-binding</keyword>
<keyword id="KW-0820">tRNA-binding</keyword>
<keyword id="KW-0862">Zinc</keyword>
<proteinExistence type="inferred from homology"/>
<protein>
    <recommendedName>
        <fullName evidence="1">Methionine--tRNA ligase</fullName>
        <ecNumber evidence="1">6.1.1.10</ecNumber>
    </recommendedName>
    <alternativeName>
        <fullName evidence="1">Methionyl-tRNA synthetase</fullName>
        <shortName evidence="1">MetRS</shortName>
    </alternativeName>
</protein>
<name>SYM_ALIF1</name>